<gene>
    <name type="primary">zbtb8a.2</name>
    <name type="synonym">zbtb8.2</name>
</gene>
<organism>
    <name type="scientific">Xenopus tropicalis</name>
    <name type="common">Western clawed frog</name>
    <name type="synonym">Silurana tropicalis</name>
    <dbReference type="NCBI Taxonomy" id="8364"/>
    <lineage>
        <taxon>Eukaryota</taxon>
        <taxon>Metazoa</taxon>
        <taxon>Chordata</taxon>
        <taxon>Craniata</taxon>
        <taxon>Vertebrata</taxon>
        <taxon>Euteleostomi</taxon>
        <taxon>Amphibia</taxon>
        <taxon>Batrachia</taxon>
        <taxon>Anura</taxon>
        <taxon>Pipoidea</taxon>
        <taxon>Pipidae</taxon>
        <taxon>Xenopodinae</taxon>
        <taxon>Xenopus</taxon>
        <taxon>Silurana</taxon>
    </lineage>
</organism>
<dbReference type="EMBL" id="BC061347">
    <property type="protein sequence ID" value="AAH61347.1"/>
    <property type="molecule type" value="mRNA"/>
</dbReference>
<dbReference type="RefSeq" id="NP_989007.1">
    <property type="nucleotide sequence ID" value="NM_203676.1"/>
</dbReference>
<dbReference type="RefSeq" id="XP_012812095.1">
    <property type="nucleotide sequence ID" value="XM_012956641.3"/>
</dbReference>
<dbReference type="SMR" id="Q6P882"/>
<dbReference type="PaxDb" id="8364-ENSXETP00000057916"/>
<dbReference type="DNASU" id="394603"/>
<dbReference type="GeneID" id="394603"/>
<dbReference type="KEGG" id="xtr:394603"/>
<dbReference type="AGR" id="Xenbase:XB-GENE-490775"/>
<dbReference type="CTD" id="394603"/>
<dbReference type="Xenbase" id="XB-GENE-490775">
    <property type="gene designation" value="zbtb8a.2"/>
</dbReference>
<dbReference type="eggNOG" id="KOG1721">
    <property type="taxonomic scope" value="Eukaryota"/>
</dbReference>
<dbReference type="HOGENOM" id="CLU_022356_1_1_1"/>
<dbReference type="InParanoid" id="Q6P882"/>
<dbReference type="OMA" id="SGCHIEV"/>
<dbReference type="OrthoDB" id="624345at2759"/>
<dbReference type="PhylomeDB" id="Q6P882"/>
<dbReference type="TreeFam" id="TF330979"/>
<dbReference type="Proteomes" id="UP000008143">
    <property type="component" value="Chromosome 2"/>
</dbReference>
<dbReference type="Bgee" id="ENSXETG00000027866">
    <property type="expression patterns" value="Expressed in testis and 12 other cell types or tissues"/>
</dbReference>
<dbReference type="GO" id="GO:0005634">
    <property type="term" value="C:nucleus"/>
    <property type="evidence" value="ECO:0007669"/>
    <property type="project" value="UniProtKB-SubCell"/>
</dbReference>
<dbReference type="GO" id="GO:0003677">
    <property type="term" value="F:DNA binding"/>
    <property type="evidence" value="ECO:0007669"/>
    <property type="project" value="UniProtKB-KW"/>
</dbReference>
<dbReference type="GO" id="GO:0008270">
    <property type="term" value="F:zinc ion binding"/>
    <property type="evidence" value="ECO:0007669"/>
    <property type="project" value="UniProtKB-KW"/>
</dbReference>
<dbReference type="FunFam" id="3.30.160.60:FF:000218">
    <property type="entry name" value="Zinc finger protein 10"/>
    <property type="match status" value="1"/>
</dbReference>
<dbReference type="Gene3D" id="3.30.160.60">
    <property type="entry name" value="Classic Zinc Finger"/>
    <property type="match status" value="2"/>
</dbReference>
<dbReference type="Gene3D" id="3.30.710.10">
    <property type="entry name" value="Potassium Channel Kv1.1, Chain A"/>
    <property type="match status" value="1"/>
</dbReference>
<dbReference type="InterPro" id="IPR000210">
    <property type="entry name" value="BTB/POZ_dom"/>
</dbReference>
<dbReference type="InterPro" id="IPR011333">
    <property type="entry name" value="SKP1/BTB/POZ_sf"/>
</dbReference>
<dbReference type="InterPro" id="IPR036236">
    <property type="entry name" value="Znf_C2H2_sf"/>
</dbReference>
<dbReference type="InterPro" id="IPR013087">
    <property type="entry name" value="Znf_C2H2_type"/>
</dbReference>
<dbReference type="InterPro" id="IPR050457">
    <property type="entry name" value="ZnFinger_BTB_dom_contain"/>
</dbReference>
<dbReference type="PANTHER" id="PTHR46105">
    <property type="entry name" value="AGAP004733-PA"/>
    <property type="match status" value="1"/>
</dbReference>
<dbReference type="PANTHER" id="PTHR46105:SF20">
    <property type="entry name" value="ZINC FINGER AND BTB DOMAIN-CONTAINING PROTEIN 8A.2"/>
    <property type="match status" value="1"/>
</dbReference>
<dbReference type="Pfam" id="PF00651">
    <property type="entry name" value="BTB"/>
    <property type="match status" value="1"/>
</dbReference>
<dbReference type="SMART" id="SM00225">
    <property type="entry name" value="BTB"/>
    <property type="match status" value="1"/>
</dbReference>
<dbReference type="SMART" id="SM00355">
    <property type="entry name" value="ZnF_C2H2"/>
    <property type="match status" value="2"/>
</dbReference>
<dbReference type="SUPFAM" id="SSF57667">
    <property type="entry name" value="beta-beta-alpha zinc fingers"/>
    <property type="match status" value="1"/>
</dbReference>
<dbReference type="SUPFAM" id="SSF54695">
    <property type="entry name" value="POZ domain"/>
    <property type="match status" value="1"/>
</dbReference>
<dbReference type="PROSITE" id="PS50097">
    <property type="entry name" value="BTB"/>
    <property type="match status" value="1"/>
</dbReference>
<dbReference type="PROSITE" id="PS00028">
    <property type="entry name" value="ZINC_FINGER_C2H2_1"/>
    <property type="match status" value="2"/>
</dbReference>
<dbReference type="PROSITE" id="PS50157">
    <property type="entry name" value="ZINC_FINGER_C2H2_2"/>
    <property type="match status" value="2"/>
</dbReference>
<reference key="1">
    <citation type="submission" date="2003-11" db="EMBL/GenBank/DDBJ databases">
        <authorList>
            <consortium name="NIH - Xenopus Gene Collection (XGC) project"/>
        </authorList>
    </citation>
    <scope>NUCLEOTIDE SEQUENCE [LARGE SCALE MRNA]</scope>
    <source>
        <tissue>Neurula</tissue>
    </source>
</reference>
<accession>Q6P882</accession>
<keyword id="KW-0238">DNA-binding</keyword>
<keyword id="KW-0479">Metal-binding</keyword>
<keyword id="KW-0539">Nucleus</keyword>
<keyword id="KW-0597">Phosphoprotein</keyword>
<keyword id="KW-1185">Reference proteome</keyword>
<keyword id="KW-0677">Repeat</keyword>
<keyword id="KW-0804">Transcription</keyword>
<keyword id="KW-0805">Transcription regulation</keyword>
<keyword id="KW-0862">Zinc</keyword>
<keyword id="KW-0863">Zinc-finger</keyword>
<comment type="function">
    <text>May be involved in transcriptional regulation.</text>
</comment>
<comment type="subcellular location">
    <subcellularLocation>
        <location evidence="3">Nucleus</location>
    </subcellularLocation>
</comment>
<evidence type="ECO:0000255" key="1">
    <source>
        <dbReference type="PROSITE-ProRule" id="PRU00037"/>
    </source>
</evidence>
<evidence type="ECO:0000255" key="2">
    <source>
        <dbReference type="PROSITE-ProRule" id="PRU00042"/>
    </source>
</evidence>
<evidence type="ECO:0000305" key="3"/>
<name>ZB8AL_XENTR</name>
<sequence length="455" mass="51422">MDLPSHHSRLLRQLDEQRRRNLFCDCHIMIDGHTFRAHRNVLYASSGYFKMLLSQSSGNVGQPTTATFDVFSADTFTAILDFMYSGKLNLSGQNVIEIMSAASYLQMTEVIGVCKMFIKSSLDINEKDRDGFLDISDKETGQQTGQCGLYSTGWGMGRYHCNQPEGDIAAYLETSSCTPYGFCSRTDEHPSSQNSISTATMKMLDRHNRIPQIPSSTCSPEEHLRECRILESDDTGCHIEVELPQGEETEAFLNCQTVVQPRSRRRHSLNRATKADEVYAKIMGIKGCLGEDNLPSLHFKCPFCTHTVKRKADLKRHLLCHTGERPYPCQACGKRFTRLEHVRSHYRTIHEAGKPICRWCKRHVTEDSGQVVQEGTRRFRLCNKCVAEVGVGSFPNEVDDDEPTIILSGDEDKEPTWNFHDGIQTSDPEIIEDVSSDVVIHKVDDSDDEIKPIIC</sequence>
<feature type="chain" id="PRO_0000378514" description="Zinc finger and BTB domain-containing protein 8A.2">
    <location>
        <begin position="1"/>
        <end position="455"/>
    </location>
</feature>
<feature type="domain" description="BTB" evidence="1">
    <location>
        <begin position="24"/>
        <end position="92"/>
    </location>
</feature>
<feature type="zinc finger region" description="C2H2-type 1" evidence="2">
    <location>
        <begin position="299"/>
        <end position="321"/>
    </location>
</feature>
<feature type="zinc finger region" description="C2H2-type 2" evidence="2">
    <location>
        <begin position="327"/>
        <end position="350"/>
    </location>
</feature>
<protein>
    <recommendedName>
        <fullName>Zinc finger and BTB domain-containing protein 8A.2</fullName>
    </recommendedName>
</protein>
<proteinExistence type="evidence at transcript level"/>